<evidence type="ECO:0000255" key="1">
    <source>
        <dbReference type="HAMAP-Rule" id="MF_01631"/>
    </source>
</evidence>
<dbReference type="EC" id="2.7.7.23" evidence="1"/>
<dbReference type="EC" id="2.3.1.157" evidence="1"/>
<dbReference type="EMBL" id="CP000241">
    <property type="protein sequence ID" value="ABF84734.1"/>
    <property type="molecule type" value="Genomic_DNA"/>
</dbReference>
<dbReference type="RefSeq" id="WP_011550023.1">
    <property type="nucleotide sequence ID" value="NC_008086.1"/>
</dbReference>
<dbReference type="SMR" id="Q1CTI8"/>
<dbReference type="KEGG" id="hpa:HPAG1_0667"/>
<dbReference type="HOGENOM" id="CLU_029499_15_2_7"/>
<dbReference type="UniPathway" id="UPA00113">
    <property type="reaction ID" value="UER00532"/>
</dbReference>
<dbReference type="UniPathway" id="UPA00113">
    <property type="reaction ID" value="UER00533"/>
</dbReference>
<dbReference type="UniPathway" id="UPA00973"/>
<dbReference type="GO" id="GO:0005737">
    <property type="term" value="C:cytoplasm"/>
    <property type="evidence" value="ECO:0007669"/>
    <property type="project" value="UniProtKB-SubCell"/>
</dbReference>
<dbReference type="GO" id="GO:0016020">
    <property type="term" value="C:membrane"/>
    <property type="evidence" value="ECO:0007669"/>
    <property type="project" value="GOC"/>
</dbReference>
<dbReference type="GO" id="GO:0019134">
    <property type="term" value="F:glucosamine-1-phosphate N-acetyltransferase activity"/>
    <property type="evidence" value="ECO:0007669"/>
    <property type="project" value="UniProtKB-UniRule"/>
</dbReference>
<dbReference type="GO" id="GO:0000287">
    <property type="term" value="F:magnesium ion binding"/>
    <property type="evidence" value="ECO:0007669"/>
    <property type="project" value="UniProtKB-UniRule"/>
</dbReference>
<dbReference type="GO" id="GO:0003977">
    <property type="term" value="F:UDP-N-acetylglucosamine diphosphorylase activity"/>
    <property type="evidence" value="ECO:0007669"/>
    <property type="project" value="UniProtKB-UniRule"/>
</dbReference>
<dbReference type="GO" id="GO:0000902">
    <property type="term" value="P:cell morphogenesis"/>
    <property type="evidence" value="ECO:0007669"/>
    <property type="project" value="UniProtKB-UniRule"/>
</dbReference>
<dbReference type="GO" id="GO:0071555">
    <property type="term" value="P:cell wall organization"/>
    <property type="evidence" value="ECO:0007669"/>
    <property type="project" value="UniProtKB-KW"/>
</dbReference>
<dbReference type="GO" id="GO:0009245">
    <property type="term" value="P:lipid A biosynthetic process"/>
    <property type="evidence" value="ECO:0007669"/>
    <property type="project" value="UniProtKB-UniRule"/>
</dbReference>
<dbReference type="GO" id="GO:0009252">
    <property type="term" value="P:peptidoglycan biosynthetic process"/>
    <property type="evidence" value="ECO:0007669"/>
    <property type="project" value="UniProtKB-UniRule"/>
</dbReference>
<dbReference type="GO" id="GO:0008360">
    <property type="term" value="P:regulation of cell shape"/>
    <property type="evidence" value="ECO:0007669"/>
    <property type="project" value="UniProtKB-KW"/>
</dbReference>
<dbReference type="GO" id="GO:0006048">
    <property type="term" value="P:UDP-N-acetylglucosamine biosynthetic process"/>
    <property type="evidence" value="ECO:0007669"/>
    <property type="project" value="UniProtKB-UniPathway"/>
</dbReference>
<dbReference type="CDD" id="cd02540">
    <property type="entry name" value="GT2_GlmU_N_bac"/>
    <property type="match status" value="1"/>
</dbReference>
<dbReference type="CDD" id="cd03353">
    <property type="entry name" value="LbH_GlmU_C"/>
    <property type="match status" value="1"/>
</dbReference>
<dbReference type="Gene3D" id="2.160.10.10">
    <property type="entry name" value="Hexapeptide repeat proteins"/>
    <property type="match status" value="1"/>
</dbReference>
<dbReference type="Gene3D" id="3.90.550.10">
    <property type="entry name" value="Spore Coat Polysaccharide Biosynthesis Protein SpsA, Chain A"/>
    <property type="match status" value="1"/>
</dbReference>
<dbReference type="HAMAP" id="MF_01631">
    <property type="entry name" value="GlmU"/>
    <property type="match status" value="1"/>
</dbReference>
<dbReference type="InterPro" id="IPR005882">
    <property type="entry name" value="Bifunctional_GlmU"/>
</dbReference>
<dbReference type="InterPro" id="IPR050065">
    <property type="entry name" value="GlmU-like"/>
</dbReference>
<dbReference type="InterPro" id="IPR038009">
    <property type="entry name" value="GlmU_C_LbH"/>
</dbReference>
<dbReference type="InterPro" id="IPR001451">
    <property type="entry name" value="Hexapep"/>
</dbReference>
<dbReference type="InterPro" id="IPR018357">
    <property type="entry name" value="Hexapep_transf_CS"/>
</dbReference>
<dbReference type="InterPro" id="IPR025877">
    <property type="entry name" value="MobA-like_NTP_Trfase"/>
</dbReference>
<dbReference type="InterPro" id="IPR029044">
    <property type="entry name" value="Nucleotide-diphossugar_trans"/>
</dbReference>
<dbReference type="InterPro" id="IPR011004">
    <property type="entry name" value="Trimer_LpxA-like_sf"/>
</dbReference>
<dbReference type="NCBIfam" id="TIGR01173">
    <property type="entry name" value="glmU"/>
    <property type="match status" value="1"/>
</dbReference>
<dbReference type="NCBIfam" id="NF010939">
    <property type="entry name" value="PRK14359.1"/>
    <property type="match status" value="1"/>
</dbReference>
<dbReference type="PANTHER" id="PTHR43584:SF3">
    <property type="entry name" value="BIFUNCTIONAL PROTEIN GLMU"/>
    <property type="match status" value="1"/>
</dbReference>
<dbReference type="PANTHER" id="PTHR43584">
    <property type="entry name" value="NUCLEOTIDYL TRANSFERASE"/>
    <property type="match status" value="1"/>
</dbReference>
<dbReference type="Pfam" id="PF00132">
    <property type="entry name" value="Hexapep"/>
    <property type="match status" value="1"/>
</dbReference>
<dbReference type="Pfam" id="PF12804">
    <property type="entry name" value="NTP_transf_3"/>
    <property type="match status" value="1"/>
</dbReference>
<dbReference type="SUPFAM" id="SSF53448">
    <property type="entry name" value="Nucleotide-diphospho-sugar transferases"/>
    <property type="match status" value="1"/>
</dbReference>
<dbReference type="SUPFAM" id="SSF51161">
    <property type="entry name" value="Trimeric LpxA-like enzymes"/>
    <property type="match status" value="1"/>
</dbReference>
<dbReference type="PROSITE" id="PS00101">
    <property type="entry name" value="HEXAPEP_TRANSFERASES"/>
    <property type="match status" value="1"/>
</dbReference>
<keyword id="KW-0012">Acyltransferase</keyword>
<keyword id="KW-0133">Cell shape</keyword>
<keyword id="KW-0961">Cell wall biogenesis/degradation</keyword>
<keyword id="KW-0963">Cytoplasm</keyword>
<keyword id="KW-0460">Magnesium</keyword>
<keyword id="KW-0479">Metal-binding</keyword>
<keyword id="KW-0511">Multifunctional enzyme</keyword>
<keyword id="KW-0548">Nucleotidyltransferase</keyword>
<keyword id="KW-0573">Peptidoglycan synthesis</keyword>
<keyword id="KW-0677">Repeat</keyword>
<keyword id="KW-0808">Transferase</keyword>
<proteinExistence type="inferred from homology"/>
<sequence length="433" mass="47689">MLSVIILAAGKGTRMHSSLPKTLHTICGEPMLFYILETAFSISDDVHLVLHHQQERIKEAVLERSKGVIFHTQIVEKYSGTGGAIMQEDKTPIPTKHERVLILNADMPLITKDALAPLLESQNNAIGLLHLADPKGYGRVVLENHQVKKIVEEKDANDEEKTIQSVNAGVYGFERKFLEKYLPKLHDQNAQKEYYLTDLIALGINENEKIDALFLEEECFLGVNSQTERAKAEEIMLERLRKNAMDLGVVMQLPSSIYLEKGVSFKGECVLEQGVRLIGNCLIENAHIKAYSVIEESQIVNSSVGPFAHARPKSVICNSHVGNFVETKNAKLQGAKAGHLSYLGDCEIGKNTNVGAGVITCNYDGKKKHQTIIGENVFIGSDSQLVAPINIGSNVLIGSGTTITKDIPSGSLSLSRAPQINIENGYFKFFKKP</sequence>
<comment type="function">
    <text evidence="1">Catalyzes the last two sequential reactions in the de novo biosynthetic pathway for UDP-N-acetylglucosamine (UDP-GlcNAc). The C-terminal domain catalyzes the transfer of acetyl group from acetyl coenzyme A to glucosamine-1-phosphate (GlcN-1-P) to produce N-acetylglucosamine-1-phosphate (GlcNAc-1-P), which is converted into UDP-GlcNAc by the transfer of uridine 5-monophosphate (from uridine 5-triphosphate), a reaction catalyzed by the N-terminal domain.</text>
</comment>
<comment type="catalytic activity">
    <reaction evidence="1">
        <text>alpha-D-glucosamine 1-phosphate + acetyl-CoA = N-acetyl-alpha-D-glucosamine 1-phosphate + CoA + H(+)</text>
        <dbReference type="Rhea" id="RHEA:13725"/>
        <dbReference type="ChEBI" id="CHEBI:15378"/>
        <dbReference type="ChEBI" id="CHEBI:57287"/>
        <dbReference type="ChEBI" id="CHEBI:57288"/>
        <dbReference type="ChEBI" id="CHEBI:57776"/>
        <dbReference type="ChEBI" id="CHEBI:58516"/>
        <dbReference type="EC" id="2.3.1.157"/>
    </reaction>
</comment>
<comment type="catalytic activity">
    <reaction evidence="1">
        <text>N-acetyl-alpha-D-glucosamine 1-phosphate + UTP + H(+) = UDP-N-acetyl-alpha-D-glucosamine + diphosphate</text>
        <dbReference type="Rhea" id="RHEA:13509"/>
        <dbReference type="ChEBI" id="CHEBI:15378"/>
        <dbReference type="ChEBI" id="CHEBI:33019"/>
        <dbReference type="ChEBI" id="CHEBI:46398"/>
        <dbReference type="ChEBI" id="CHEBI:57705"/>
        <dbReference type="ChEBI" id="CHEBI:57776"/>
        <dbReference type="EC" id="2.7.7.23"/>
    </reaction>
</comment>
<comment type="cofactor">
    <cofactor evidence="1">
        <name>Mg(2+)</name>
        <dbReference type="ChEBI" id="CHEBI:18420"/>
    </cofactor>
    <text evidence="1">Binds 1 Mg(2+) ion per subunit.</text>
</comment>
<comment type="pathway">
    <text evidence="1">Nucleotide-sugar biosynthesis; UDP-N-acetyl-alpha-D-glucosamine biosynthesis; N-acetyl-alpha-D-glucosamine 1-phosphate from alpha-D-glucosamine 6-phosphate (route II): step 2/2.</text>
</comment>
<comment type="pathway">
    <text evidence="1">Nucleotide-sugar biosynthesis; UDP-N-acetyl-alpha-D-glucosamine biosynthesis; UDP-N-acetyl-alpha-D-glucosamine from N-acetyl-alpha-D-glucosamine 1-phosphate: step 1/1.</text>
</comment>
<comment type="pathway">
    <text evidence="1">Bacterial outer membrane biogenesis; LPS lipid A biosynthesis.</text>
</comment>
<comment type="subunit">
    <text evidence="1">Homotrimer.</text>
</comment>
<comment type="subcellular location">
    <subcellularLocation>
        <location evidence="1">Cytoplasm</location>
    </subcellularLocation>
</comment>
<comment type="similarity">
    <text evidence="1">In the N-terminal section; belongs to the N-acetylglucosamine-1-phosphate uridyltransferase family.</text>
</comment>
<comment type="similarity">
    <text evidence="1">In the C-terminal section; belongs to the transferase hexapeptide repeat family.</text>
</comment>
<protein>
    <recommendedName>
        <fullName evidence="1">Bifunctional protein GlmU</fullName>
    </recommendedName>
    <domain>
        <recommendedName>
            <fullName evidence="1">UDP-N-acetylglucosamine pyrophosphorylase</fullName>
            <ecNumber evidence="1">2.7.7.23</ecNumber>
        </recommendedName>
        <alternativeName>
            <fullName evidence="1">N-acetylglucosamine-1-phosphate uridyltransferase</fullName>
        </alternativeName>
    </domain>
    <domain>
        <recommendedName>
            <fullName evidence="1">Glucosamine-1-phosphate N-acetyltransferase</fullName>
            <ecNumber evidence="1">2.3.1.157</ecNumber>
        </recommendedName>
    </domain>
</protein>
<feature type="chain" id="PRO_0000263134" description="Bifunctional protein GlmU">
    <location>
        <begin position="1"/>
        <end position="433"/>
    </location>
</feature>
<feature type="region of interest" description="Pyrophosphorylase" evidence="1">
    <location>
        <begin position="1"/>
        <end position="226"/>
    </location>
</feature>
<feature type="region of interest" description="Linker" evidence="1">
    <location>
        <begin position="227"/>
        <end position="247"/>
    </location>
</feature>
<feature type="region of interest" description="N-acetyltransferase" evidence="1">
    <location>
        <begin position="248"/>
        <end position="433"/>
    </location>
</feature>
<feature type="active site" description="Proton acceptor" evidence="1">
    <location>
        <position position="339"/>
    </location>
</feature>
<feature type="binding site" evidence="1">
    <location>
        <begin position="7"/>
        <end position="10"/>
    </location>
    <ligand>
        <name>UDP-N-acetyl-alpha-D-glucosamine</name>
        <dbReference type="ChEBI" id="CHEBI:57705"/>
    </ligand>
</feature>
<feature type="binding site" evidence="1">
    <location>
        <position position="21"/>
    </location>
    <ligand>
        <name>UDP-N-acetyl-alpha-D-glucosamine</name>
        <dbReference type="ChEBI" id="CHEBI:57705"/>
    </ligand>
</feature>
<feature type="binding site" evidence="1">
    <location>
        <begin position="80"/>
        <end position="81"/>
    </location>
    <ligand>
        <name>UDP-N-acetyl-alpha-D-glucosamine</name>
        <dbReference type="ChEBI" id="CHEBI:57705"/>
    </ligand>
</feature>
<feature type="binding site" evidence="1">
    <location>
        <position position="106"/>
    </location>
    <ligand>
        <name>Mg(2+)</name>
        <dbReference type="ChEBI" id="CHEBI:18420"/>
    </ligand>
</feature>
<feature type="binding site" evidence="1">
    <location>
        <position position="138"/>
    </location>
    <ligand>
        <name>UDP-N-acetyl-alpha-D-glucosamine</name>
        <dbReference type="ChEBI" id="CHEBI:57705"/>
    </ligand>
</feature>
<feature type="binding site" evidence="1">
    <location>
        <position position="152"/>
    </location>
    <ligand>
        <name>UDP-N-acetyl-alpha-D-glucosamine</name>
        <dbReference type="ChEBI" id="CHEBI:57705"/>
    </ligand>
</feature>
<feature type="binding site" evidence="1">
    <location>
        <position position="167"/>
    </location>
    <ligand>
        <name>UDP-N-acetyl-alpha-D-glucosamine</name>
        <dbReference type="ChEBI" id="CHEBI:57705"/>
    </ligand>
</feature>
<feature type="binding site" evidence="1">
    <location>
        <position position="224"/>
    </location>
    <ligand>
        <name>Mg(2+)</name>
        <dbReference type="ChEBI" id="CHEBI:18420"/>
    </ligand>
</feature>
<feature type="binding site" evidence="1">
    <location>
        <position position="224"/>
    </location>
    <ligand>
        <name>UDP-N-acetyl-alpha-D-glucosamine</name>
        <dbReference type="ChEBI" id="CHEBI:57705"/>
    </ligand>
</feature>
<feature type="binding site" evidence="1">
    <location>
        <position position="311"/>
    </location>
    <ligand>
        <name>UDP-N-acetyl-alpha-D-glucosamine</name>
        <dbReference type="ChEBI" id="CHEBI:57705"/>
    </ligand>
</feature>
<feature type="binding site" evidence="1">
    <location>
        <position position="328"/>
    </location>
    <ligand>
        <name>UDP-N-acetyl-alpha-D-glucosamine</name>
        <dbReference type="ChEBI" id="CHEBI:57705"/>
    </ligand>
</feature>
<feature type="binding site" evidence="1">
    <location>
        <position position="342"/>
    </location>
    <ligand>
        <name>UDP-N-acetyl-alpha-D-glucosamine</name>
        <dbReference type="ChEBI" id="CHEBI:57705"/>
    </ligand>
</feature>
<feature type="binding site" evidence="1">
    <location>
        <position position="353"/>
    </location>
    <ligand>
        <name>UDP-N-acetyl-alpha-D-glucosamine</name>
        <dbReference type="ChEBI" id="CHEBI:57705"/>
    </ligand>
</feature>
<feature type="binding site" evidence="1">
    <location>
        <position position="356"/>
    </location>
    <ligand>
        <name>acetyl-CoA</name>
        <dbReference type="ChEBI" id="CHEBI:57288"/>
    </ligand>
</feature>
<feature type="binding site" evidence="1">
    <location>
        <begin position="362"/>
        <end position="363"/>
    </location>
    <ligand>
        <name>acetyl-CoA</name>
        <dbReference type="ChEBI" id="CHEBI:57288"/>
    </ligand>
</feature>
<feature type="binding site" evidence="1">
    <location>
        <position position="381"/>
    </location>
    <ligand>
        <name>acetyl-CoA</name>
        <dbReference type="ChEBI" id="CHEBI:57288"/>
    </ligand>
</feature>
<feature type="binding site" evidence="1">
    <location>
        <position position="399"/>
    </location>
    <ligand>
        <name>acetyl-CoA</name>
        <dbReference type="ChEBI" id="CHEBI:57288"/>
    </ligand>
</feature>
<feature type="binding site" evidence="1">
    <location>
        <position position="416"/>
    </location>
    <ligand>
        <name>acetyl-CoA</name>
        <dbReference type="ChEBI" id="CHEBI:57288"/>
    </ligand>
</feature>
<gene>
    <name evidence="1" type="primary">glmU</name>
    <name type="ordered locus">HPAG1_0667</name>
</gene>
<organism>
    <name type="scientific">Helicobacter pylori (strain HPAG1)</name>
    <dbReference type="NCBI Taxonomy" id="357544"/>
    <lineage>
        <taxon>Bacteria</taxon>
        <taxon>Pseudomonadati</taxon>
        <taxon>Campylobacterota</taxon>
        <taxon>Epsilonproteobacteria</taxon>
        <taxon>Campylobacterales</taxon>
        <taxon>Helicobacteraceae</taxon>
        <taxon>Helicobacter</taxon>
    </lineage>
</organism>
<reference key="1">
    <citation type="journal article" date="2006" name="Proc. Natl. Acad. Sci. U.S.A.">
        <title>The complete genome sequence of a chronic atrophic gastritis Helicobacter pylori strain: evolution during disease progression.</title>
        <authorList>
            <person name="Oh J.D."/>
            <person name="Kling-Baeckhed H."/>
            <person name="Giannakis M."/>
            <person name="Xu J."/>
            <person name="Fulton R.S."/>
            <person name="Fulton L.A."/>
            <person name="Cordum H.S."/>
            <person name="Wang C."/>
            <person name="Elliott G."/>
            <person name="Edwards J."/>
            <person name="Mardis E.R."/>
            <person name="Engstrand L.G."/>
            <person name="Gordon J.I."/>
        </authorList>
    </citation>
    <scope>NUCLEOTIDE SEQUENCE [LARGE SCALE GENOMIC DNA]</scope>
    <source>
        <strain>HPAG1</strain>
    </source>
</reference>
<name>GLMU_HELPH</name>
<accession>Q1CTI8</accession>